<name>YDBK_BACSU</name>
<reference key="1">
    <citation type="submission" date="1997-03" db="EMBL/GenBank/DDBJ databases">
        <title>A 148 kbp sequence of the region between 35 and 47 degree of the Bacillus subtilis genome.</title>
        <authorList>
            <person name="Kasahara Y."/>
            <person name="Nakai S."/>
            <person name="Lee S."/>
            <person name="Sadaie Y."/>
            <person name="Ogasawara N."/>
        </authorList>
    </citation>
    <scope>NUCLEOTIDE SEQUENCE [GENOMIC DNA]</scope>
    <source>
        <strain>168</strain>
    </source>
</reference>
<reference key="2">
    <citation type="journal article" date="1997" name="Nature">
        <title>The complete genome sequence of the Gram-positive bacterium Bacillus subtilis.</title>
        <authorList>
            <person name="Kunst F."/>
            <person name="Ogasawara N."/>
            <person name="Moszer I."/>
            <person name="Albertini A.M."/>
            <person name="Alloni G."/>
            <person name="Azevedo V."/>
            <person name="Bertero M.G."/>
            <person name="Bessieres P."/>
            <person name="Bolotin A."/>
            <person name="Borchert S."/>
            <person name="Borriss R."/>
            <person name="Boursier L."/>
            <person name="Brans A."/>
            <person name="Braun M."/>
            <person name="Brignell S.C."/>
            <person name="Bron S."/>
            <person name="Brouillet S."/>
            <person name="Bruschi C.V."/>
            <person name="Caldwell B."/>
            <person name="Capuano V."/>
            <person name="Carter N.M."/>
            <person name="Choi S.-K."/>
            <person name="Codani J.-J."/>
            <person name="Connerton I.F."/>
            <person name="Cummings N.J."/>
            <person name="Daniel R.A."/>
            <person name="Denizot F."/>
            <person name="Devine K.M."/>
            <person name="Duesterhoeft A."/>
            <person name="Ehrlich S.D."/>
            <person name="Emmerson P.T."/>
            <person name="Entian K.-D."/>
            <person name="Errington J."/>
            <person name="Fabret C."/>
            <person name="Ferrari E."/>
            <person name="Foulger D."/>
            <person name="Fritz C."/>
            <person name="Fujita M."/>
            <person name="Fujita Y."/>
            <person name="Fuma S."/>
            <person name="Galizzi A."/>
            <person name="Galleron N."/>
            <person name="Ghim S.-Y."/>
            <person name="Glaser P."/>
            <person name="Goffeau A."/>
            <person name="Golightly E.J."/>
            <person name="Grandi G."/>
            <person name="Guiseppi G."/>
            <person name="Guy B.J."/>
            <person name="Haga K."/>
            <person name="Haiech J."/>
            <person name="Harwood C.R."/>
            <person name="Henaut A."/>
            <person name="Hilbert H."/>
            <person name="Holsappel S."/>
            <person name="Hosono S."/>
            <person name="Hullo M.-F."/>
            <person name="Itaya M."/>
            <person name="Jones L.-M."/>
            <person name="Joris B."/>
            <person name="Karamata D."/>
            <person name="Kasahara Y."/>
            <person name="Klaerr-Blanchard M."/>
            <person name="Klein C."/>
            <person name="Kobayashi Y."/>
            <person name="Koetter P."/>
            <person name="Koningstein G."/>
            <person name="Krogh S."/>
            <person name="Kumano M."/>
            <person name="Kurita K."/>
            <person name="Lapidus A."/>
            <person name="Lardinois S."/>
            <person name="Lauber J."/>
            <person name="Lazarevic V."/>
            <person name="Lee S.-M."/>
            <person name="Levine A."/>
            <person name="Liu H."/>
            <person name="Masuda S."/>
            <person name="Mauel C."/>
            <person name="Medigue C."/>
            <person name="Medina N."/>
            <person name="Mellado R.P."/>
            <person name="Mizuno M."/>
            <person name="Moestl D."/>
            <person name="Nakai S."/>
            <person name="Noback M."/>
            <person name="Noone D."/>
            <person name="O'Reilly M."/>
            <person name="Ogawa K."/>
            <person name="Ogiwara A."/>
            <person name="Oudega B."/>
            <person name="Park S.-H."/>
            <person name="Parro V."/>
            <person name="Pohl T.M."/>
            <person name="Portetelle D."/>
            <person name="Porwollik S."/>
            <person name="Prescott A.M."/>
            <person name="Presecan E."/>
            <person name="Pujic P."/>
            <person name="Purnelle B."/>
            <person name="Rapoport G."/>
            <person name="Rey M."/>
            <person name="Reynolds S."/>
            <person name="Rieger M."/>
            <person name="Rivolta C."/>
            <person name="Rocha E."/>
            <person name="Roche B."/>
            <person name="Rose M."/>
            <person name="Sadaie Y."/>
            <person name="Sato T."/>
            <person name="Scanlan E."/>
            <person name="Schleich S."/>
            <person name="Schroeter R."/>
            <person name="Scoffone F."/>
            <person name="Sekiguchi J."/>
            <person name="Sekowska A."/>
            <person name="Seror S.J."/>
            <person name="Serror P."/>
            <person name="Shin B.-S."/>
            <person name="Soldo B."/>
            <person name="Sorokin A."/>
            <person name="Tacconi E."/>
            <person name="Takagi T."/>
            <person name="Takahashi H."/>
            <person name="Takemaru K."/>
            <person name="Takeuchi M."/>
            <person name="Tamakoshi A."/>
            <person name="Tanaka T."/>
            <person name="Terpstra P."/>
            <person name="Tognoni A."/>
            <person name="Tosato V."/>
            <person name="Uchiyama S."/>
            <person name="Vandenbol M."/>
            <person name="Vannier F."/>
            <person name="Vassarotti A."/>
            <person name="Viari A."/>
            <person name="Wambutt R."/>
            <person name="Wedler E."/>
            <person name="Wedler H."/>
            <person name="Weitzenegger T."/>
            <person name="Winters P."/>
            <person name="Wipat A."/>
            <person name="Yamamoto H."/>
            <person name="Yamane K."/>
            <person name="Yasumoto K."/>
            <person name="Yata K."/>
            <person name="Yoshida K."/>
            <person name="Yoshikawa H.-F."/>
            <person name="Zumstein E."/>
            <person name="Yoshikawa H."/>
            <person name="Danchin A."/>
        </authorList>
    </citation>
    <scope>NUCLEOTIDE SEQUENCE [LARGE SCALE GENOMIC DNA]</scope>
    <source>
        <strain>168</strain>
    </source>
</reference>
<accession>P96606</accession>
<accession>Q797L4</accession>
<feature type="chain" id="PRO_0000375814" description="Uncharacterized membrane protein YdbK">
    <location>
        <begin position="1"/>
        <end position="246"/>
    </location>
</feature>
<feature type="transmembrane region" description="Helical" evidence="1">
    <location>
        <begin position="7"/>
        <end position="27"/>
    </location>
</feature>
<feature type="transmembrane region" description="Helical" evidence="1">
    <location>
        <begin position="50"/>
        <end position="70"/>
    </location>
</feature>
<feature type="transmembrane region" description="Helical" evidence="1">
    <location>
        <begin position="99"/>
        <end position="119"/>
    </location>
</feature>
<feature type="transmembrane region" description="Helical" evidence="1">
    <location>
        <begin position="135"/>
        <end position="155"/>
    </location>
</feature>
<feature type="transmembrane region" description="Helical" evidence="1">
    <location>
        <begin position="163"/>
        <end position="183"/>
    </location>
</feature>
<feature type="transmembrane region" description="Helical" evidence="1">
    <location>
        <begin position="219"/>
        <end position="239"/>
    </location>
</feature>
<proteinExistence type="predicted"/>
<keyword id="KW-1003">Cell membrane</keyword>
<keyword id="KW-0472">Membrane</keyword>
<keyword id="KW-1185">Reference proteome</keyword>
<keyword id="KW-0812">Transmembrane</keyword>
<keyword id="KW-1133">Transmembrane helix</keyword>
<evidence type="ECO:0000255" key="1"/>
<evidence type="ECO:0000305" key="2"/>
<sequence>MKLFNRKVTLVSLILMAVFQFFMALIIKRIVISAGTDENFIGYLSYTPSLNILLQALTIVIAATIVSMEFDKKTIKFLLIRPVKRQKVFWSKLITVVMVSFYLYLAYYILALLFGLLFFGTSVTAESKTLLVNTLALIGSNWLEAVMMGLFGLLCSSLFRNSAVAVVVSFVVLYGASTLVQLMKLFENKWGSFLLFANTDFTQYRSGETALFSGMTPLFSIGILIIHAIFFIVVGWWCFCKRDVRV</sequence>
<protein>
    <recommendedName>
        <fullName>Uncharacterized membrane protein YdbK</fullName>
    </recommendedName>
</protein>
<organism>
    <name type="scientific">Bacillus subtilis (strain 168)</name>
    <dbReference type="NCBI Taxonomy" id="224308"/>
    <lineage>
        <taxon>Bacteria</taxon>
        <taxon>Bacillati</taxon>
        <taxon>Bacillota</taxon>
        <taxon>Bacilli</taxon>
        <taxon>Bacillales</taxon>
        <taxon>Bacillaceae</taxon>
        <taxon>Bacillus</taxon>
    </lineage>
</organism>
<dbReference type="EMBL" id="AB001488">
    <property type="protein sequence ID" value="BAA19287.1"/>
    <property type="molecule type" value="Genomic_DNA"/>
</dbReference>
<dbReference type="EMBL" id="AL009126">
    <property type="protein sequence ID" value="CAB12257.1"/>
    <property type="molecule type" value="Genomic_DNA"/>
</dbReference>
<dbReference type="PIR" id="F69771">
    <property type="entry name" value="F69771"/>
</dbReference>
<dbReference type="RefSeq" id="NP_388331.1">
    <property type="nucleotide sequence ID" value="NC_000964.3"/>
</dbReference>
<dbReference type="RefSeq" id="WP_010886409.1">
    <property type="nucleotide sequence ID" value="NZ_OZ025638.1"/>
</dbReference>
<dbReference type="SMR" id="P96606"/>
<dbReference type="FunCoup" id="P96606">
    <property type="interactions" value="259"/>
</dbReference>
<dbReference type="STRING" id="224308.BSU04500"/>
<dbReference type="PaxDb" id="224308-BSU04500"/>
<dbReference type="DNASU" id="939944"/>
<dbReference type="EnsemblBacteria" id="CAB12257">
    <property type="protein sequence ID" value="CAB12257"/>
    <property type="gene ID" value="BSU_04500"/>
</dbReference>
<dbReference type="GeneID" id="939944"/>
<dbReference type="KEGG" id="bsu:BSU04500"/>
<dbReference type="PATRIC" id="fig|224308.43.peg.469"/>
<dbReference type="eggNOG" id="COG1277">
    <property type="taxonomic scope" value="Bacteria"/>
</dbReference>
<dbReference type="InParanoid" id="P96606"/>
<dbReference type="OrthoDB" id="8613028at2"/>
<dbReference type="BioCyc" id="BSUB:BSU04500-MONOMER"/>
<dbReference type="Proteomes" id="UP000001570">
    <property type="component" value="Chromosome"/>
</dbReference>
<dbReference type="GO" id="GO:0005886">
    <property type="term" value="C:plasma membrane"/>
    <property type="evidence" value="ECO:0007669"/>
    <property type="project" value="UniProtKB-SubCell"/>
</dbReference>
<dbReference type="PANTHER" id="PTHR37305">
    <property type="entry name" value="INTEGRAL MEMBRANE PROTEIN-RELATED"/>
    <property type="match status" value="1"/>
</dbReference>
<dbReference type="PANTHER" id="PTHR37305:SF1">
    <property type="entry name" value="MEMBRANE PROTEIN"/>
    <property type="match status" value="1"/>
</dbReference>
<dbReference type="Pfam" id="PF12730">
    <property type="entry name" value="ABC2_membrane_4"/>
    <property type="match status" value="1"/>
</dbReference>
<gene>
    <name type="primary">ydbK</name>
    <name type="ordered locus">BSU04500</name>
</gene>
<comment type="subcellular location">
    <subcellularLocation>
        <location evidence="2">Cell membrane</location>
        <topology evidence="2">Multi-pass membrane protein</topology>
    </subcellularLocation>
</comment>